<accession>A5GW34</accession>
<name>AROC_SYNR3</name>
<protein>
    <recommendedName>
        <fullName evidence="1">Chorismate synthase</fullName>
        <shortName evidence="1">CS</shortName>
        <ecNumber evidence="1">4.2.3.5</ecNumber>
    </recommendedName>
    <alternativeName>
        <fullName evidence="1">5-enolpyruvylshikimate-3-phosphate phospholyase</fullName>
    </alternativeName>
</protein>
<keyword id="KW-0028">Amino-acid biosynthesis</keyword>
<keyword id="KW-0057">Aromatic amino acid biosynthesis</keyword>
<keyword id="KW-0274">FAD</keyword>
<keyword id="KW-0285">Flavoprotein</keyword>
<keyword id="KW-0288">FMN</keyword>
<keyword id="KW-0456">Lyase</keyword>
<keyword id="KW-0521">NADP</keyword>
<keyword id="KW-1185">Reference proteome</keyword>
<comment type="function">
    <text evidence="1">Catalyzes the anti-1,4-elimination of the C-3 phosphate and the C-6 proR hydrogen from 5-enolpyruvylshikimate-3-phosphate (EPSP) to yield chorismate, which is the branch point compound that serves as the starting substrate for the three terminal pathways of aromatic amino acid biosynthesis. This reaction introduces a second double bond into the aromatic ring system.</text>
</comment>
<comment type="catalytic activity">
    <reaction evidence="1">
        <text>5-O-(1-carboxyvinyl)-3-phosphoshikimate = chorismate + phosphate</text>
        <dbReference type="Rhea" id="RHEA:21020"/>
        <dbReference type="ChEBI" id="CHEBI:29748"/>
        <dbReference type="ChEBI" id="CHEBI:43474"/>
        <dbReference type="ChEBI" id="CHEBI:57701"/>
        <dbReference type="EC" id="4.2.3.5"/>
    </reaction>
</comment>
<comment type="cofactor">
    <cofactor evidence="1">
        <name>FMNH2</name>
        <dbReference type="ChEBI" id="CHEBI:57618"/>
    </cofactor>
    <text evidence="1">Reduced FMN (FMNH(2)).</text>
</comment>
<comment type="pathway">
    <text evidence="1">Metabolic intermediate biosynthesis; chorismate biosynthesis; chorismate from D-erythrose 4-phosphate and phosphoenolpyruvate: step 7/7.</text>
</comment>
<comment type="subunit">
    <text evidence="1">Homotetramer.</text>
</comment>
<comment type="similarity">
    <text evidence="1">Belongs to the chorismate synthase family.</text>
</comment>
<evidence type="ECO:0000255" key="1">
    <source>
        <dbReference type="HAMAP-Rule" id="MF_00300"/>
    </source>
</evidence>
<dbReference type="EC" id="4.2.3.5" evidence="1"/>
<dbReference type="EMBL" id="CT978603">
    <property type="protein sequence ID" value="CAK29093.1"/>
    <property type="molecule type" value="Genomic_DNA"/>
</dbReference>
<dbReference type="SMR" id="A5GW34"/>
<dbReference type="STRING" id="316278.SynRCC307_2190"/>
<dbReference type="KEGG" id="syr:SynRCC307_2190"/>
<dbReference type="eggNOG" id="COG0082">
    <property type="taxonomic scope" value="Bacteria"/>
</dbReference>
<dbReference type="HOGENOM" id="CLU_034547_0_1_3"/>
<dbReference type="OrthoDB" id="9771806at2"/>
<dbReference type="UniPathway" id="UPA00053">
    <property type="reaction ID" value="UER00090"/>
</dbReference>
<dbReference type="Proteomes" id="UP000001115">
    <property type="component" value="Chromosome"/>
</dbReference>
<dbReference type="GO" id="GO:0005829">
    <property type="term" value="C:cytosol"/>
    <property type="evidence" value="ECO:0007669"/>
    <property type="project" value="TreeGrafter"/>
</dbReference>
<dbReference type="GO" id="GO:0004107">
    <property type="term" value="F:chorismate synthase activity"/>
    <property type="evidence" value="ECO:0007669"/>
    <property type="project" value="UniProtKB-UniRule"/>
</dbReference>
<dbReference type="GO" id="GO:0010181">
    <property type="term" value="F:FMN binding"/>
    <property type="evidence" value="ECO:0007669"/>
    <property type="project" value="TreeGrafter"/>
</dbReference>
<dbReference type="GO" id="GO:0008652">
    <property type="term" value="P:amino acid biosynthetic process"/>
    <property type="evidence" value="ECO:0007669"/>
    <property type="project" value="UniProtKB-KW"/>
</dbReference>
<dbReference type="GO" id="GO:0009073">
    <property type="term" value="P:aromatic amino acid family biosynthetic process"/>
    <property type="evidence" value="ECO:0007669"/>
    <property type="project" value="UniProtKB-KW"/>
</dbReference>
<dbReference type="GO" id="GO:0009423">
    <property type="term" value="P:chorismate biosynthetic process"/>
    <property type="evidence" value="ECO:0007669"/>
    <property type="project" value="UniProtKB-UniRule"/>
</dbReference>
<dbReference type="CDD" id="cd07304">
    <property type="entry name" value="Chorismate_synthase"/>
    <property type="match status" value="1"/>
</dbReference>
<dbReference type="FunFam" id="3.60.150.10:FF:000003">
    <property type="entry name" value="Chorismate synthase"/>
    <property type="match status" value="1"/>
</dbReference>
<dbReference type="Gene3D" id="3.60.150.10">
    <property type="entry name" value="Chorismate synthase AroC"/>
    <property type="match status" value="1"/>
</dbReference>
<dbReference type="HAMAP" id="MF_00300">
    <property type="entry name" value="Chorismate_synth"/>
    <property type="match status" value="1"/>
</dbReference>
<dbReference type="InterPro" id="IPR000453">
    <property type="entry name" value="Chorismate_synth"/>
</dbReference>
<dbReference type="InterPro" id="IPR035904">
    <property type="entry name" value="Chorismate_synth_AroC_sf"/>
</dbReference>
<dbReference type="InterPro" id="IPR020541">
    <property type="entry name" value="Chorismate_synthase_CS"/>
</dbReference>
<dbReference type="NCBIfam" id="TIGR00033">
    <property type="entry name" value="aroC"/>
    <property type="match status" value="1"/>
</dbReference>
<dbReference type="NCBIfam" id="NF003793">
    <property type="entry name" value="PRK05382.1"/>
    <property type="match status" value="1"/>
</dbReference>
<dbReference type="PANTHER" id="PTHR21085">
    <property type="entry name" value="CHORISMATE SYNTHASE"/>
    <property type="match status" value="1"/>
</dbReference>
<dbReference type="PANTHER" id="PTHR21085:SF0">
    <property type="entry name" value="CHORISMATE SYNTHASE"/>
    <property type="match status" value="1"/>
</dbReference>
<dbReference type="Pfam" id="PF01264">
    <property type="entry name" value="Chorismate_synt"/>
    <property type="match status" value="1"/>
</dbReference>
<dbReference type="PIRSF" id="PIRSF001456">
    <property type="entry name" value="Chorismate_synth"/>
    <property type="match status" value="1"/>
</dbReference>
<dbReference type="SUPFAM" id="SSF103263">
    <property type="entry name" value="Chorismate synthase, AroC"/>
    <property type="match status" value="1"/>
</dbReference>
<dbReference type="PROSITE" id="PS00787">
    <property type="entry name" value="CHORISMATE_SYNTHASE_1"/>
    <property type="match status" value="1"/>
</dbReference>
<dbReference type="PROSITE" id="PS00788">
    <property type="entry name" value="CHORISMATE_SYNTHASE_2"/>
    <property type="match status" value="1"/>
</dbReference>
<dbReference type="PROSITE" id="PS00789">
    <property type="entry name" value="CHORISMATE_SYNTHASE_3"/>
    <property type="match status" value="1"/>
</dbReference>
<feature type="chain" id="PRO_1000022566" description="Chorismate synthase">
    <location>
        <begin position="1"/>
        <end position="360"/>
    </location>
</feature>
<feature type="binding site" evidence="1">
    <location>
        <position position="47"/>
    </location>
    <ligand>
        <name>NADP(+)</name>
        <dbReference type="ChEBI" id="CHEBI:58349"/>
    </ligand>
</feature>
<feature type="binding site" evidence="1">
    <location>
        <begin position="124"/>
        <end position="126"/>
    </location>
    <ligand>
        <name>FMN</name>
        <dbReference type="ChEBI" id="CHEBI:58210"/>
    </ligand>
</feature>
<feature type="binding site" evidence="1">
    <location>
        <position position="286"/>
    </location>
    <ligand>
        <name>FMN</name>
        <dbReference type="ChEBI" id="CHEBI:58210"/>
    </ligand>
</feature>
<feature type="binding site" evidence="1">
    <location>
        <begin position="301"/>
        <end position="305"/>
    </location>
    <ligand>
        <name>FMN</name>
        <dbReference type="ChEBI" id="CHEBI:58210"/>
    </ligand>
</feature>
<feature type="binding site" evidence="1">
    <location>
        <position position="327"/>
    </location>
    <ligand>
        <name>FMN</name>
        <dbReference type="ChEBI" id="CHEBI:58210"/>
    </ligand>
</feature>
<sequence>MGSSFGHLFRISTFGESHGGGVGVIVDGCPPRLAIDIEAVQAELDRRKPGQSKITTPRKEDDRVEALSGLLDGVSLGTPIAMVVRNKDQRPGDYKEMQVAFRPSHADATYQSKYGIQARSGGGRASARETIGRVAAGAIAKQMLRQLHGTEVLAWVKRIHTLEANIDPAVPTLDAVESNIVRCPDAAMAEQMIERIESIGRDGDSCGGVIECVVRRPPTGLGMPVFDKLEADLAKAVMSLPATKGFEIGSGFAGTTLLGSQHNDAFLPTSDGSLHTATNNSGGIQGGISNGEPIVLRVAFKPTATIRKEQQTINASGEATTLAAKGRHDPCVLPRAVPMVEAMVALVLADHALRQRGQCG</sequence>
<proteinExistence type="inferred from homology"/>
<reference key="1">
    <citation type="submission" date="2006-05" db="EMBL/GenBank/DDBJ databases">
        <authorList>
            <consortium name="Genoscope"/>
        </authorList>
    </citation>
    <scope>NUCLEOTIDE SEQUENCE [LARGE SCALE GENOMIC DNA]</scope>
    <source>
        <strain>RCC307</strain>
    </source>
</reference>
<organism>
    <name type="scientific">Synechococcus sp. (strain RCC307)</name>
    <dbReference type="NCBI Taxonomy" id="316278"/>
    <lineage>
        <taxon>Bacteria</taxon>
        <taxon>Bacillati</taxon>
        <taxon>Cyanobacteriota</taxon>
        <taxon>Cyanophyceae</taxon>
        <taxon>Synechococcales</taxon>
        <taxon>Synechococcaceae</taxon>
        <taxon>Synechococcus</taxon>
    </lineage>
</organism>
<gene>
    <name evidence="1" type="primary">aroC</name>
    <name type="ordered locus">SynRCC307_2190</name>
</gene>